<protein>
    <recommendedName>
        <fullName>Transcription elongation factor SPT4</fullName>
    </recommendedName>
    <alternativeName>
        <fullName>Chromatin elongation factor SPT4</fullName>
    </alternativeName>
</protein>
<reference key="1">
    <citation type="journal article" date="2005" name="Science">
        <title>The genome of the basidiomycetous yeast and human pathogen Cryptococcus neoformans.</title>
        <authorList>
            <person name="Loftus B.J."/>
            <person name="Fung E."/>
            <person name="Roncaglia P."/>
            <person name="Rowley D."/>
            <person name="Amedeo P."/>
            <person name="Bruno D."/>
            <person name="Vamathevan J."/>
            <person name="Miranda M."/>
            <person name="Anderson I.J."/>
            <person name="Fraser J.A."/>
            <person name="Allen J.E."/>
            <person name="Bosdet I.E."/>
            <person name="Brent M.R."/>
            <person name="Chiu R."/>
            <person name="Doering T.L."/>
            <person name="Donlin M.J."/>
            <person name="D'Souza C.A."/>
            <person name="Fox D.S."/>
            <person name="Grinberg V."/>
            <person name="Fu J."/>
            <person name="Fukushima M."/>
            <person name="Haas B.J."/>
            <person name="Huang J.C."/>
            <person name="Janbon G."/>
            <person name="Jones S.J.M."/>
            <person name="Koo H.L."/>
            <person name="Krzywinski M.I."/>
            <person name="Kwon-Chung K.J."/>
            <person name="Lengeler K.B."/>
            <person name="Maiti R."/>
            <person name="Marra M.A."/>
            <person name="Marra R.E."/>
            <person name="Mathewson C.A."/>
            <person name="Mitchell T.G."/>
            <person name="Pertea M."/>
            <person name="Riggs F.R."/>
            <person name="Salzberg S.L."/>
            <person name="Schein J.E."/>
            <person name="Shvartsbeyn A."/>
            <person name="Shin H."/>
            <person name="Shumway M."/>
            <person name="Specht C.A."/>
            <person name="Suh B.B."/>
            <person name="Tenney A."/>
            <person name="Utterback T.R."/>
            <person name="Wickes B.L."/>
            <person name="Wortman J.R."/>
            <person name="Wye N.H."/>
            <person name="Kronstad J.W."/>
            <person name="Lodge J.K."/>
            <person name="Heitman J."/>
            <person name="Davis R.W."/>
            <person name="Fraser C.M."/>
            <person name="Hyman R.W."/>
        </authorList>
    </citation>
    <scope>NUCLEOTIDE SEQUENCE [LARGE SCALE GENOMIC DNA]</scope>
    <source>
        <strain>JEC21 / ATCC MYA-565</strain>
    </source>
</reference>
<organism>
    <name type="scientific">Cryptococcus neoformans var. neoformans serotype D (strain JEC21 / ATCC MYA-565)</name>
    <name type="common">Filobasidiella neoformans</name>
    <dbReference type="NCBI Taxonomy" id="214684"/>
    <lineage>
        <taxon>Eukaryota</taxon>
        <taxon>Fungi</taxon>
        <taxon>Dikarya</taxon>
        <taxon>Basidiomycota</taxon>
        <taxon>Agaricomycotina</taxon>
        <taxon>Tremellomycetes</taxon>
        <taxon>Tremellales</taxon>
        <taxon>Cryptococcaceae</taxon>
        <taxon>Cryptococcus</taxon>
        <taxon>Cryptococcus neoformans species complex</taxon>
    </lineage>
</organism>
<keyword id="KW-0137">Centromere</keyword>
<keyword id="KW-0158">Chromosome</keyword>
<keyword id="KW-0479">Metal-binding</keyword>
<keyword id="KW-0507">mRNA processing</keyword>
<keyword id="KW-0539">Nucleus</keyword>
<keyword id="KW-1185">Reference proteome</keyword>
<keyword id="KW-0804">Transcription</keyword>
<keyword id="KW-0862">Zinc</keyword>
<keyword id="KW-0863">Zinc-finger</keyword>
<gene>
    <name type="primary">SPT4</name>
    <name type="ordered locus">CNI03430</name>
</gene>
<dbReference type="EMBL" id="AE017349">
    <property type="protein sequence ID" value="AAW45583.1"/>
    <property type="molecule type" value="Genomic_DNA"/>
</dbReference>
<dbReference type="RefSeq" id="XP_572890.1">
    <property type="nucleotide sequence ID" value="XM_572890.1"/>
</dbReference>
<dbReference type="SMR" id="P0CR68"/>
<dbReference type="FunCoup" id="P0CR68">
    <property type="interactions" value="284"/>
</dbReference>
<dbReference type="STRING" id="214684.P0CR68"/>
<dbReference type="PaxDb" id="214684-P0CR68"/>
<dbReference type="EnsemblFungi" id="AAW45583">
    <property type="protein sequence ID" value="AAW45583"/>
    <property type="gene ID" value="CNI03430"/>
</dbReference>
<dbReference type="GeneID" id="3259485"/>
<dbReference type="KEGG" id="cne:CNI03430"/>
<dbReference type="VEuPathDB" id="FungiDB:CNI03430"/>
<dbReference type="eggNOG" id="KOG3490">
    <property type="taxonomic scope" value="Eukaryota"/>
</dbReference>
<dbReference type="HOGENOM" id="CLU_138052_2_0_1"/>
<dbReference type="InParanoid" id="P0CR68"/>
<dbReference type="OMA" id="FDGMIAV"/>
<dbReference type="OrthoDB" id="248751at2759"/>
<dbReference type="Proteomes" id="UP000002149">
    <property type="component" value="Chromosome 9"/>
</dbReference>
<dbReference type="GO" id="GO:0000775">
    <property type="term" value="C:chromosome, centromeric region"/>
    <property type="evidence" value="ECO:0007669"/>
    <property type="project" value="UniProtKB-SubCell"/>
</dbReference>
<dbReference type="GO" id="GO:0032044">
    <property type="term" value="C:DSIF complex"/>
    <property type="evidence" value="ECO:0000318"/>
    <property type="project" value="GO_Central"/>
</dbReference>
<dbReference type="GO" id="GO:0000993">
    <property type="term" value="F:RNA polymerase II complex binding"/>
    <property type="evidence" value="ECO:0000318"/>
    <property type="project" value="GO_Central"/>
</dbReference>
<dbReference type="GO" id="GO:0008270">
    <property type="term" value="F:zinc ion binding"/>
    <property type="evidence" value="ECO:0007669"/>
    <property type="project" value="UniProtKB-KW"/>
</dbReference>
<dbReference type="GO" id="GO:0006397">
    <property type="term" value="P:mRNA processing"/>
    <property type="evidence" value="ECO:0007669"/>
    <property type="project" value="UniProtKB-KW"/>
</dbReference>
<dbReference type="GO" id="GO:0006355">
    <property type="term" value="P:regulation of DNA-templated transcription"/>
    <property type="evidence" value="ECO:0007669"/>
    <property type="project" value="InterPro"/>
</dbReference>
<dbReference type="GO" id="GO:0006368">
    <property type="term" value="P:transcription elongation by RNA polymerase II"/>
    <property type="evidence" value="ECO:0000318"/>
    <property type="project" value="GO_Central"/>
</dbReference>
<dbReference type="GO" id="GO:0140673">
    <property type="term" value="P:transcription elongation-coupled chromatin remodeling"/>
    <property type="evidence" value="ECO:0007669"/>
    <property type="project" value="InterPro"/>
</dbReference>
<dbReference type="CDD" id="cd07973">
    <property type="entry name" value="Spt4"/>
    <property type="match status" value="1"/>
</dbReference>
<dbReference type="FunFam" id="3.30.40.210:FF:000002">
    <property type="entry name" value="Transcription elongation factor SPT4 homolog"/>
    <property type="match status" value="1"/>
</dbReference>
<dbReference type="Gene3D" id="3.30.40.210">
    <property type="match status" value="1"/>
</dbReference>
<dbReference type="InterPro" id="IPR029040">
    <property type="entry name" value="RPABC4/Spt4"/>
</dbReference>
<dbReference type="InterPro" id="IPR009287">
    <property type="entry name" value="Spt4"/>
</dbReference>
<dbReference type="InterPro" id="IPR022800">
    <property type="entry name" value="Spt4/RpoE2_Znf"/>
</dbReference>
<dbReference type="InterPro" id="IPR038510">
    <property type="entry name" value="Spt4_sf"/>
</dbReference>
<dbReference type="PANTHER" id="PTHR12882">
    <property type="entry name" value="SUPPRESSOR OF TY 4"/>
    <property type="match status" value="1"/>
</dbReference>
<dbReference type="PANTHER" id="PTHR12882:SF1">
    <property type="entry name" value="TRANSCRIPTION ELONGATION FACTOR SPT4"/>
    <property type="match status" value="1"/>
</dbReference>
<dbReference type="Pfam" id="PF06093">
    <property type="entry name" value="Spt4"/>
    <property type="match status" value="1"/>
</dbReference>
<dbReference type="PIRSF" id="PIRSF025023">
    <property type="entry name" value="Spt4"/>
    <property type="match status" value="1"/>
</dbReference>
<dbReference type="SMART" id="SM01389">
    <property type="entry name" value="Spt4"/>
    <property type="match status" value="1"/>
</dbReference>
<dbReference type="SUPFAM" id="SSF63393">
    <property type="entry name" value="RNA polymerase subunits"/>
    <property type="match status" value="1"/>
</dbReference>
<accession>P0CR68</accession>
<accession>Q55MV6</accession>
<accession>Q5KB83</accession>
<comment type="function">
    <text evidence="1">The SPT4-SPT5 complex mediates both activation and inhibition of transcription elongation, and plays a role in pre-mRNA processing. This complex seems to be important for the stability of the RNA polymerase II elongation machinery on the chromatin template but not for the inherent ability of this machinery to translocate down the gene (By similarity).</text>
</comment>
<comment type="subunit">
    <text evidence="1">Component of the SPT4-SPT5 complex. Interacts with RNA polymerase II (By similarity).</text>
</comment>
<comment type="subcellular location">
    <subcellularLocation>
        <location evidence="1">Nucleus</location>
    </subcellularLocation>
    <subcellularLocation>
        <location evidence="1">Chromosome</location>
        <location evidence="1">Centromere</location>
    </subcellularLocation>
    <text evidence="1">Centromere and heterochromatin.</text>
</comment>
<comment type="similarity">
    <text evidence="3">Belongs to the SPT4 family.</text>
</comment>
<feature type="chain" id="PRO_0000238549" description="Transcription elongation factor SPT4">
    <location>
        <begin position="1"/>
        <end position="113"/>
    </location>
</feature>
<feature type="zinc finger region" description="C4-type" evidence="2">
    <location>
        <begin position="13"/>
        <end position="33"/>
    </location>
</feature>
<evidence type="ECO:0000250" key="1"/>
<evidence type="ECO:0000255" key="2"/>
<evidence type="ECO:0000305" key="3"/>
<name>SPT4_CRYNJ</name>
<sequence>MPPKSGRAELRACLVCSILQSTNDFLTQGCPNCEDILEMRGSAERVAECTSLLYDGMIAMIEPSESWVARWQRIDKRMRGIYAVRVTGRAPQDVIDAIEARGGVYRPRDAVED</sequence>
<proteinExistence type="inferred from homology"/>